<proteinExistence type="evidence at transcript level"/>
<name>APCD1_PELSI</name>
<evidence type="ECO:0000250" key="1"/>
<evidence type="ECO:0000255" key="2"/>
<evidence type="ECO:0000256" key="3">
    <source>
        <dbReference type="SAM" id="MobiDB-lite"/>
    </source>
</evidence>
<evidence type="ECO:0000269" key="4">
    <source>
    </source>
</evidence>
<evidence type="ECO:0000305" key="5"/>
<comment type="function">
    <text evidence="1">Negative regulator of the Wnt signaling pathway. Inhibits Wnt signaling in a cell-autonomous manner and functions upstream of beta-catenin (By similarity).</text>
</comment>
<comment type="subcellular location">
    <subcellularLocation>
        <location evidence="1">Cell membrane</location>
        <topology evidence="1">Single-pass type I membrane protein</topology>
    </subcellularLocation>
</comment>
<comment type="tissue specificity">
    <text evidence="4">Expressed in both the mesenchyme and the ectoderm of the carapacial ridge.</text>
</comment>
<comment type="developmental stage">
    <text evidence="4">Expressed in specific regions in the limb buds of stage 13 embryos.</text>
</comment>
<comment type="similarity">
    <text evidence="5">Belongs to the APCDD1 family.</text>
</comment>
<reference key="1">
    <citation type="journal article" date="2005" name="Evol. Dev.">
        <title>Comprehensive survey of carapacial ridge-specific genes in turtle implies co-option of some regulatory genes in carapace evolution.</title>
        <authorList>
            <person name="Kuraku S."/>
            <person name="Usuda R."/>
            <person name="Kuratani S."/>
        </authorList>
    </citation>
    <scope>NUCLEOTIDE SEQUENCE [MRNA]</scope>
    <scope>TISSUE SPECIFICITY</scope>
    <scope>DEVELOPMENTAL STAGE</scope>
</reference>
<dbReference type="EMBL" id="AB124565">
    <property type="protein sequence ID" value="BAD74115.1"/>
    <property type="molecule type" value="mRNA"/>
</dbReference>
<dbReference type="RefSeq" id="NP_001273819.1">
    <property type="nucleotide sequence ID" value="NM_001286890.1"/>
</dbReference>
<dbReference type="SMR" id="Q5R2J4"/>
<dbReference type="STRING" id="13735.ENSPSIP00000011522"/>
<dbReference type="GlyCosmos" id="Q5R2J4">
    <property type="glycosylation" value="3 sites, No reported glycans"/>
</dbReference>
<dbReference type="GeneID" id="102450692"/>
<dbReference type="KEGG" id="pss:102450692"/>
<dbReference type="CTD" id="147495"/>
<dbReference type="eggNOG" id="ENOG502QQ0C">
    <property type="taxonomic scope" value="Eukaryota"/>
</dbReference>
<dbReference type="HOGENOM" id="CLU_035648_0_0_1"/>
<dbReference type="OrthoDB" id="5985602at2759"/>
<dbReference type="Proteomes" id="UP000007267">
    <property type="component" value="Unassembled WGS sequence"/>
</dbReference>
<dbReference type="GO" id="GO:0005615">
    <property type="term" value="C:extracellular space"/>
    <property type="evidence" value="ECO:0000304"/>
    <property type="project" value="AgBase"/>
</dbReference>
<dbReference type="GO" id="GO:0005886">
    <property type="term" value="C:plasma membrane"/>
    <property type="evidence" value="ECO:0000250"/>
    <property type="project" value="UniProtKB"/>
</dbReference>
<dbReference type="GO" id="GO:0017147">
    <property type="term" value="F:Wnt-protein binding"/>
    <property type="evidence" value="ECO:0000250"/>
    <property type="project" value="UniProtKB"/>
</dbReference>
<dbReference type="GO" id="GO:0030178">
    <property type="term" value="P:negative regulation of Wnt signaling pathway"/>
    <property type="evidence" value="ECO:0000250"/>
    <property type="project" value="UniProtKB"/>
</dbReference>
<dbReference type="GO" id="GO:0016055">
    <property type="term" value="P:Wnt signaling pathway"/>
    <property type="evidence" value="ECO:0007669"/>
    <property type="project" value="UniProtKB-KW"/>
</dbReference>
<dbReference type="InterPro" id="IPR042425">
    <property type="entry name" value="APCDD1"/>
</dbReference>
<dbReference type="InterPro" id="IPR029405">
    <property type="entry name" value="APCDD1_dom"/>
</dbReference>
<dbReference type="PANTHER" id="PTHR31021">
    <property type="entry name" value="ADENOMATOSIS POLYPOSIS COLI DOWN-REGULATED 1"/>
    <property type="match status" value="1"/>
</dbReference>
<dbReference type="PANTHER" id="PTHR31021:SF2">
    <property type="entry name" value="PROTEIN APCDD1"/>
    <property type="match status" value="1"/>
</dbReference>
<dbReference type="Pfam" id="PF14921">
    <property type="entry name" value="APCDDC"/>
    <property type="match status" value="2"/>
</dbReference>
<dbReference type="SMART" id="SM01352">
    <property type="entry name" value="APCDDC"/>
    <property type="match status" value="2"/>
</dbReference>
<keyword id="KW-1003">Cell membrane</keyword>
<keyword id="KW-0325">Glycoprotein</keyword>
<keyword id="KW-0472">Membrane</keyword>
<keyword id="KW-1185">Reference proteome</keyword>
<keyword id="KW-0732">Signal</keyword>
<keyword id="KW-0812">Transmembrane</keyword>
<keyword id="KW-0879">Wnt signaling pathway</keyword>
<gene>
    <name type="primary">APCDD1</name>
</gene>
<organism>
    <name type="scientific">Pelodiscus sinensis</name>
    <name type="common">Chinese softshell turtle</name>
    <name type="synonym">Trionyx sinensis</name>
    <dbReference type="NCBI Taxonomy" id="13735"/>
    <lineage>
        <taxon>Eukaryota</taxon>
        <taxon>Metazoa</taxon>
        <taxon>Chordata</taxon>
        <taxon>Craniata</taxon>
        <taxon>Vertebrata</taxon>
        <taxon>Euteleostomi</taxon>
        <taxon>Archelosauria</taxon>
        <taxon>Testudinata</taxon>
        <taxon>Testudines</taxon>
        <taxon>Cryptodira</taxon>
        <taxon>Trionychia</taxon>
        <taxon>Trionychidae</taxon>
        <taxon>Pelodiscus</taxon>
    </lineage>
</organism>
<feature type="signal peptide" evidence="2">
    <location>
        <begin position="1"/>
        <end position="26"/>
    </location>
</feature>
<feature type="chain" id="PRO_0000395839" description="Protein APCDD1">
    <location>
        <begin position="27"/>
        <end position="515"/>
    </location>
</feature>
<feature type="topological domain" description="Extracellular" evidence="2">
    <location>
        <begin position="27"/>
        <end position="495"/>
    </location>
</feature>
<feature type="transmembrane region" evidence="2">
    <location>
        <begin position="496"/>
        <end position="513"/>
    </location>
</feature>
<feature type="topological domain" description="Cytoplasmic" evidence="2">
    <location>
        <begin position="514"/>
        <end position="515"/>
    </location>
</feature>
<feature type="region of interest" description="Disordered" evidence="3">
    <location>
        <begin position="437"/>
        <end position="486"/>
    </location>
</feature>
<feature type="compositionally biased region" description="Basic and acidic residues" evidence="3">
    <location>
        <begin position="472"/>
        <end position="482"/>
    </location>
</feature>
<feature type="glycosylation site" description="N-linked (GlcNAc...) asparagine" evidence="2">
    <location>
        <position position="100"/>
    </location>
</feature>
<feature type="glycosylation site" description="N-linked (GlcNAc...) asparagine" evidence="2">
    <location>
        <position position="168"/>
    </location>
</feature>
<feature type="glycosylation site" description="N-linked (GlcNAc...) asparagine" evidence="2">
    <location>
        <position position="319"/>
    </location>
</feature>
<accession>Q5R2J4</accession>
<protein>
    <recommendedName>
        <fullName>Protein APCDD1</fullName>
    </recommendedName>
    <alternativeName>
        <fullName>Adenomatosis polyposis coli down-regulated 1 protein homolog</fullName>
        <shortName>PsAPCDD1</shortName>
    </alternativeName>
</protein>
<sequence length="515" mass="58924">MSLPCCGRVRYLLLALLLHGLGEGSALLHPDSRSHPRSLEKSAWRAFKESQCHHMLKHLHNGARITVQMPPSIEGHWVSTGCEVRSGPEFITRSYRFYHNNTFKAYQFYYGGNRCTNPTYTLVIRGKIRLRQASWIIRGGTEADYQLHNVQIISHSEAVAEKLSQLVNRTCPGFVPGNSPWEQDVSYNLWREENGCECTRALNFAMHELQLIRVEKQYLHHNLDHLVEELFLGDIHTDATQRMYYRPSSYQPPLQNAKNHDHSCIACRIIYRSDEHHPPILPPKADLTIGLHGEWVSQRCEVRPEVLFLTRHFIFHDNNNTWEGHYYHYSDPICKHPTFTIYAKGRYSRGVHSSKVMGGTEFVFKVNHMKVTPMDIATASLLNVFNGNECGAEGSWQVGVQQDVTHTNGCVALGIRLPHTEYEIFKMEQNARGSYLLYNGQRPSDGSSPDRPEKRATSYQMPLVQCASSAPRPEESAEENKIGRYSSRAPKKDSSVFMLTLMLFICTGSHWNIHS</sequence>